<evidence type="ECO:0000269" key="1">
    <source>
    </source>
</evidence>
<evidence type="ECO:0000269" key="2">
    <source>
    </source>
</evidence>
<evidence type="ECO:0000269" key="3">
    <source>
    </source>
</evidence>
<evidence type="ECO:0000305" key="4"/>
<sequence>MINKNDIVADVVTDYPKAADIFRSVGIDFCCGGQVSIEAAALEKKNVDLNELLQRLNDVEQTNTPGSLNPKFLNVSSLIQYIQSAYHEPLREEFKNLTPYVTKLSKVHGPNHPYLVELKETYDTFKNGMLEHMQKEDDVDFPKLIKYEQGEVVDDINTVIDDLVSDHIATGELLVKMSELTSSYEPPIEACGTWRLVYQRLKALEVLTHEHVHLENHVLFKKVS</sequence>
<proteinExistence type="evidence at protein level"/>
<organism>
    <name type="scientific">Staphylococcus aureus (strain NCTC 8325 / PS 47)</name>
    <dbReference type="NCBI Taxonomy" id="93061"/>
    <lineage>
        <taxon>Bacteria</taxon>
        <taxon>Bacillati</taxon>
        <taxon>Bacillota</taxon>
        <taxon>Bacilli</taxon>
        <taxon>Bacillales</taxon>
        <taxon>Staphylococcaceae</taxon>
        <taxon>Staphylococcus</taxon>
    </lineage>
</organism>
<name>SCDA_STAA8</name>
<reference key="1">
    <citation type="journal article" date="1997" name="Microbiology">
        <title>The Staphylococcus aureus scdA gene: a novel locus that affects cell division and morphogenesis.</title>
        <authorList>
            <person name="Brunskill E.W."/>
            <person name="de Jonge B.L.M."/>
            <person name="Bayles K.W."/>
        </authorList>
    </citation>
    <scope>NUCLEOTIDE SEQUENCE [GENOMIC DNA]</scope>
    <scope>FUNCTION</scope>
    <scope>INDUCTION</scope>
    <source>
        <strain>NCTC 8325 / PS 47</strain>
    </source>
</reference>
<reference key="2">
    <citation type="book" date="2006" name="Gram positive pathogens, 2nd edition">
        <title>The Staphylococcus aureus NCTC 8325 genome.</title>
        <editorList>
            <person name="Fischetti V."/>
            <person name="Novick R."/>
            <person name="Ferretti J."/>
            <person name="Portnoy D."/>
            <person name="Rood J."/>
        </editorList>
        <authorList>
            <person name="Gillaspy A.F."/>
            <person name="Worrell V."/>
            <person name="Orvis J."/>
            <person name="Roe B.A."/>
            <person name="Dyer D.W."/>
            <person name="Iandolo J.J."/>
        </authorList>
    </citation>
    <scope>NUCLEOTIDE SEQUENCE [LARGE SCALE GENOMIC DNA]</scope>
    <source>
        <strain>NCTC 8325 / PS 47</strain>
    </source>
</reference>
<reference key="3">
    <citation type="journal article" date="2006" name="J. Bacteriol.">
        <title>Global transcriptome analysis of Staphylococcus aureus response to hydrogen peroxide.</title>
        <authorList>
            <person name="Chang W."/>
            <person name="Small D.A."/>
            <person name="Toghrol F."/>
            <person name="Bentley W.E."/>
        </authorList>
    </citation>
    <scope>INDUCTION</scope>
    <source>
        <strain>NCTC 8325 / PS 47</strain>
    </source>
</reference>
<reference key="4">
    <citation type="journal article" date="2008" name="J. Bacteriol.">
        <title>Widespread distribution in pathogenic bacteria of di-iron proteins that repair oxidative and nitrosative damage to iron-sulfur centers.</title>
        <authorList>
            <person name="Overton T.W."/>
            <person name="Justino M.C."/>
            <person name="Li Y."/>
            <person name="Baptista J.M."/>
            <person name="Melo A.M."/>
            <person name="Cole J.A."/>
            <person name="Saraiva L.M."/>
        </authorList>
    </citation>
    <scope>FUNCTION</scope>
    <scope>SUBUNIT</scope>
    <scope>INDUCTION</scope>
    <scope>DISRUPTION PHENOTYPE</scope>
    <scope>DI-IRON CENTER</scope>
    <source>
        <strain>NCTC 8325 / PS 47</strain>
    </source>
</reference>
<feature type="chain" id="PRO_0000220340" description="Iron-sulfur cluster repair protein ScdA">
    <location>
        <begin position="1"/>
        <end position="224"/>
    </location>
</feature>
<feature type="sequence conflict" description="In Ref. 1; AAB81287." evidence="4" ref="1">
    <original>E</original>
    <variation>G</variation>
    <location>
        <position position="43"/>
    </location>
</feature>
<feature type="sequence conflict" description="In Ref. 1; AAB81287." evidence="4" ref="1">
    <original>EQ</original>
    <variation>NK</variation>
    <location>
        <begin position="60"/>
        <end position="61"/>
    </location>
</feature>
<dbReference type="EMBL" id="U57060">
    <property type="protein sequence ID" value="AAB81287.1"/>
    <property type="molecule type" value="Genomic_DNA"/>
</dbReference>
<dbReference type="EMBL" id="CP000253">
    <property type="protein sequence ID" value="ABD29404.1"/>
    <property type="molecule type" value="Genomic_DNA"/>
</dbReference>
<dbReference type="RefSeq" id="WP_000608826.1">
    <property type="nucleotide sequence ID" value="NZ_LS483365.1"/>
</dbReference>
<dbReference type="RefSeq" id="YP_498824.1">
    <property type="nucleotide sequence ID" value="NC_007795.1"/>
</dbReference>
<dbReference type="SMR" id="P72360"/>
<dbReference type="STRING" id="93061.SAOUHSC_00229"/>
<dbReference type="PaxDb" id="1280-SAXN108_0239"/>
<dbReference type="GeneID" id="3920304"/>
<dbReference type="KEGG" id="sao:SAOUHSC_00229"/>
<dbReference type="PATRIC" id="fig|93061.5.peg.210"/>
<dbReference type="eggNOG" id="COG2846">
    <property type="taxonomic scope" value="Bacteria"/>
</dbReference>
<dbReference type="HOGENOM" id="CLU_076075_0_1_9"/>
<dbReference type="OrthoDB" id="9797132at2"/>
<dbReference type="PRO" id="PR:P72360"/>
<dbReference type="Proteomes" id="UP000008816">
    <property type="component" value="Chromosome"/>
</dbReference>
<dbReference type="GO" id="GO:0005737">
    <property type="term" value="C:cytoplasm"/>
    <property type="evidence" value="ECO:0007669"/>
    <property type="project" value="UniProtKB-SubCell"/>
</dbReference>
<dbReference type="GO" id="GO:0005506">
    <property type="term" value="F:iron ion binding"/>
    <property type="evidence" value="ECO:0000318"/>
    <property type="project" value="GO_Central"/>
</dbReference>
<dbReference type="GO" id="GO:0030091">
    <property type="term" value="P:protein repair"/>
    <property type="evidence" value="ECO:0000315"/>
    <property type="project" value="UniProtKB"/>
</dbReference>
<dbReference type="GO" id="GO:0051409">
    <property type="term" value="P:response to nitrosative stress"/>
    <property type="evidence" value="ECO:0007669"/>
    <property type="project" value="UniProtKB-UniRule"/>
</dbReference>
<dbReference type="GO" id="GO:0006979">
    <property type="term" value="P:response to oxidative stress"/>
    <property type="evidence" value="ECO:0000314"/>
    <property type="project" value="UniProtKB"/>
</dbReference>
<dbReference type="FunFam" id="1.20.120.520:FF:000003">
    <property type="entry name" value="Iron-sulfur cluster repair protein ScdA"/>
    <property type="match status" value="1"/>
</dbReference>
<dbReference type="Gene3D" id="1.20.120.520">
    <property type="entry name" value="nmb1532 protein domain like"/>
    <property type="match status" value="1"/>
</dbReference>
<dbReference type="Gene3D" id="1.10.3910.10">
    <property type="entry name" value="SP0561-like"/>
    <property type="match status" value="1"/>
</dbReference>
<dbReference type="HAMAP" id="MF_01156">
    <property type="entry name" value="RIC_ScdA"/>
    <property type="match status" value="1"/>
</dbReference>
<dbReference type="InterPro" id="IPR012312">
    <property type="entry name" value="Hemerythrin-like"/>
</dbReference>
<dbReference type="InterPro" id="IPR019903">
    <property type="entry name" value="RIC_family"/>
</dbReference>
<dbReference type="InterPro" id="IPR023551">
    <property type="entry name" value="ScdA"/>
</dbReference>
<dbReference type="InterPro" id="IPR038062">
    <property type="entry name" value="ScdA-like_N_sf"/>
</dbReference>
<dbReference type="NCBIfam" id="TIGR03652">
    <property type="entry name" value="FeS_repair_RIC"/>
    <property type="match status" value="1"/>
</dbReference>
<dbReference type="NCBIfam" id="NF009777">
    <property type="entry name" value="PRK13276.1"/>
    <property type="match status" value="1"/>
</dbReference>
<dbReference type="PANTHER" id="PTHR36438">
    <property type="entry name" value="IRON-SULFUR CLUSTER REPAIR PROTEIN YTFE"/>
    <property type="match status" value="1"/>
</dbReference>
<dbReference type="PANTHER" id="PTHR36438:SF1">
    <property type="entry name" value="IRON-SULFUR CLUSTER REPAIR PROTEIN YTFE"/>
    <property type="match status" value="1"/>
</dbReference>
<dbReference type="Pfam" id="PF01814">
    <property type="entry name" value="Hemerythrin"/>
    <property type="match status" value="1"/>
</dbReference>
<dbReference type="Pfam" id="PF04405">
    <property type="entry name" value="ScdA_N"/>
    <property type="match status" value="1"/>
</dbReference>
<dbReference type="SUPFAM" id="SSF140683">
    <property type="entry name" value="SP0561-like"/>
    <property type="match status" value="1"/>
</dbReference>
<comment type="function">
    <text evidence="2 3">Di-iron-containing protein involved in the repair of iron-sulfur clusters damaged by oxidative and nitrosative stress conditions.</text>
</comment>
<comment type="subunit">
    <text evidence="2">Homodimer.</text>
</comment>
<comment type="subcellular location">
    <subcellularLocation>
        <location evidence="4">Cytoplasm</location>
    </subcellularLocation>
</comment>
<comment type="induction">
    <text evidence="1 2 3">In stationary-phase. Induced by hydrogen peroxide.</text>
</comment>
<comment type="disruption phenotype">
    <text evidence="2">Mutant shows increased sensitivity to oxidative stress.</text>
</comment>
<comment type="similarity">
    <text evidence="4">Belongs to the RIC family. ScdA subfamily.</text>
</comment>
<keyword id="KW-0963">Cytoplasm</keyword>
<keyword id="KW-0408">Iron</keyword>
<keyword id="KW-0479">Metal-binding</keyword>
<keyword id="KW-1185">Reference proteome</keyword>
<keyword id="KW-0346">Stress response</keyword>
<protein>
    <recommendedName>
        <fullName>Iron-sulfur cluster repair protein ScdA</fullName>
    </recommendedName>
    <alternativeName>
        <fullName>Cell wall-related protein ScdA</fullName>
    </alternativeName>
</protein>
<gene>
    <name type="primary">scdA</name>
    <name type="ordered locus">SAOUHSC_00229</name>
</gene>
<accession>P72360</accession>
<accession>Q2G1B6</accession>